<protein>
    <recommendedName>
        <fullName evidence="1">UPF0761 membrane protein Tola_0461</fullName>
    </recommendedName>
</protein>
<evidence type="ECO:0000255" key="1">
    <source>
        <dbReference type="HAMAP-Rule" id="MF_00672"/>
    </source>
</evidence>
<reference key="1">
    <citation type="submission" date="2009-05" db="EMBL/GenBank/DDBJ databases">
        <title>Complete sequence of Tolumonas auensis DSM 9187.</title>
        <authorList>
            <consortium name="US DOE Joint Genome Institute"/>
            <person name="Lucas S."/>
            <person name="Copeland A."/>
            <person name="Lapidus A."/>
            <person name="Glavina del Rio T."/>
            <person name="Tice H."/>
            <person name="Bruce D."/>
            <person name="Goodwin L."/>
            <person name="Pitluck S."/>
            <person name="Chertkov O."/>
            <person name="Brettin T."/>
            <person name="Detter J.C."/>
            <person name="Han C."/>
            <person name="Larimer F."/>
            <person name="Land M."/>
            <person name="Hauser L."/>
            <person name="Kyrpides N."/>
            <person name="Mikhailova N."/>
            <person name="Spring S."/>
            <person name="Beller H."/>
        </authorList>
    </citation>
    <scope>NUCLEOTIDE SEQUENCE [LARGE SCALE GENOMIC DNA]</scope>
    <source>
        <strain>DSM 9187 / NBRC 110442 / TA 4</strain>
    </source>
</reference>
<dbReference type="EMBL" id="CP001616">
    <property type="protein sequence ID" value="ACQ92090.1"/>
    <property type="molecule type" value="Genomic_DNA"/>
</dbReference>
<dbReference type="RefSeq" id="WP_012728689.1">
    <property type="nucleotide sequence ID" value="NC_012691.1"/>
</dbReference>
<dbReference type="STRING" id="595494.Tola_0461"/>
<dbReference type="KEGG" id="tau:Tola_0461"/>
<dbReference type="eggNOG" id="COG1295">
    <property type="taxonomic scope" value="Bacteria"/>
</dbReference>
<dbReference type="HOGENOM" id="CLU_032288_0_0_6"/>
<dbReference type="OrthoDB" id="9808671at2"/>
<dbReference type="Proteomes" id="UP000009073">
    <property type="component" value="Chromosome"/>
</dbReference>
<dbReference type="GO" id="GO:0005886">
    <property type="term" value="C:plasma membrane"/>
    <property type="evidence" value="ECO:0007669"/>
    <property type="project" value="UniProtKB-SubCell"/>
</dbReference>
<dbReference type="HAMAP" id="MF_00672">
    <property type="entry name" value="UPF0761"/>
    <property type="match status" value="1"/>
</dbReference>
<dbReference type="InterPro" id="IPR023679">
    <property type="entry name" value="UPF0761_bac"/>
</dbReference>
<dbReference type="InterPro" id="IPR017039">
    <property type="entry name" value="Virul_fac_BrkB"/>
</dbReference>
<dbReference type="NCBIfam" id="TIGR00765">
    <property type="entry name" value="yihY_not_rbn"/>
    <property type="match status" value="1"/>
</dbReference>
<dbReference type="PANTHER" id="PTHR30213">
    <property type="entry name" value="INNER MEMBRANE PROTEIN YHJD"/>
    <property type="match status" value="1"/>
</dbReference>
<dbReference type="PANTHER" id="PTHR30213:SF0">
    <property type="entry name" value="UPF0761 MEMBRANE PROTEIN YIHY"/>
    <property type="match status" value="1"/>
</dbReference>
<dbReference type="Pfam" id="PF03631">
    <property type="entry name" value="Virul_fac_BrkB"/>
    <property type="match status" value="1"/>
</dbReference>
<dbReference type="PIRSF" id="PIRSF035875">
    <property type="entry name" value="RNase_BN"/>
    <property type="match status" value="1"/>
</dbReference>
<organism>
    <name type="scientific">Tolumonas auensis (strain DSM 9187 / NBRC 110442 / TA 4)</name>
    <dbReference type="NCBI Taxonomy" id="595494"/>
    <lineage>
        <taxon>Bacteria</taxon>
        <taxon>Pseudomonadati</taxon>
        <taxon>Pseudomonadota</taxon>
        <taxon>Gammaproteobacteria</taxon>
        <taxon>Aeromonadales</taxon>
        <taxon>Aeromonadaceae</taxon>
        <taxon>Tolumonas</taxon>
    </lineage>
</organism>
<proteinExistence type="inferred from homology"/>
<keyword id="KW-0997">Cell inner membrane</keyword>
<keyword id="KW-1003">Cell membrane</keyword>
<keyword id="KW-0472">Membrane</keyword>
<keyword id="KW-1185">Reference proteome</keyword>
<keyword id="KW-0812">Transmembrane</keyword>
<keyword id="KW-1133">Transmembrane helix</keyword>
<gene>
    <name type="ordered locus">Tola_0461</name>
</gene>
<feature type="chain" id="PRO_0000391060" description="UPF0761 membrane protein Tola_0461">
    <location>
        <begin position="1"/>
        <end position="302"/>
    </location>
</feature>
<feature type="transmembrane region" description="Helical" evidence="1">
    <location>
        <begin position="51"/>
        <end position="71"/>
    </location>
</feature>
<feature type="transmembrane region" description="Helical" evidence="1">
    <location>
        <begin position="111"/>
        <end position="131"/>
    </location>
</feature>
<feature type="transmembrane region" description="Helical" evidence="1">
    <location>
        <begin position="150"/>
        <end position="170"/>
    </location>
</feature>
<feature type="transmembrane region" description="Helical" evidence="1">
    <location>
        <begin position="188"/>
        <end position="208"/>
    </location>
</feature>
<feature type="transmembrane region" description="Helical" evidence="1">
    <location>
        <begin position="222"/>
        <end position="242"/>
    </location>
</feature>
<feature type="transmembrane region" description="Helical" evidence="1">
    <location>
        <begin position="256"/>
        <end position="276"/>
    </location>
</feature>
<name>Y461_TOLAT</name>
<sequence>MTQDPRRLLALRNQRWAKSRLFCLRSRRFSAFFWRRVWHDRLPVLAGHLAYVSLLSIVPLLAVVFSVLSWLPRFSYFRRQFELFMFSNFVPETEIAFRYHFSLFVKNASKTTSIGLLMLVLLALLLIAAIDENMNHIWRCRGQRKWLKTITMYSIVLGVVPLLVGGSLLLSSQIQGWALWHYELVSSLGGGLLELLPYLLSLGGILLLYKVVPNIYVRWQHALLGATLAALLFEVAKEGFGYYIAHFGTYKSIYGALAGIPILMIWLYMSWLVVLLGAEFTATLGEWQLNRTLRGRKPRLPG</sequence>
<comment type="subcellular location">
    <subcellularLocation>
        <location evidence="1">Cell inner membrane</location>
        <topology evidence="1">Multi-pass membrane protein</topology>
    </subcellularLocation>
</comment>
<comment type="similarity">
    <text evidence="1">Belongs to the UPF0761 family.</text>
</comment>
<accession>C4L9W1</accession>